<protein>
    <recommendedName>
        <fullName evidence="1">ATP phosphoribosyltransferase regulatory subunit</fullName>
    </recommendedName>
</protein>
<name>HISZ_CUPNH</name>
<organism>
    <name type="scientific">Cupriavidus necator (strain ATCC 17699 / DSM 428 / KCTC 22496 / NCIMB 10442 / H16 / Stanier 337)</name>
    <name type="common">Ralstonia eutropha</name>
    <dbReference type="NCBI Taxonomy" id="381666"/>
    <lineage>
        <taxon>Bacteria</taxon>
        <taxon>Pseudomonadati</taxon>
        <taxon>Pseudomonadota</taxon>
        <taxon>Betaproteobacteria</taxon>
        <taxon>Burkholderiales</taxon>
        <taxon>Burkholderiaceae</taxon>
        <taxon>Cupriavidus</taxon>
    </lineage>
</organism>
<dbReference type="EMBL" id="AM260479">
    <property type="protein sequence ID" value="CAJ93450.1"/>
    <property type="molecule type" value="Genomic_DNA"/>
</dbReference>
<dbReference type="RefSeq" id="WP_010809435.1">
    <property type="nucleotide sequence ID" value="NZ_CP039287.1"/>
</dbReference>
<dbReference type="SMR" id="Q0K971"/>
<dbReference type="STRING" id="381666.H16_A2355"/>
<dbReference type="KEGG" id="reh:H16_A2355"/>
<dbReference type="eggNOG" id="COG3705">
    <property type="taxonomic scope" value="Bacteria"/>
</dbReference>
<dbReference type="HOGENOM" id="CLU_025113_0_1_4"/>
<dbReference type="OrthoDB" id="9769617at2"/>
<dbReference type="UniPathway" id="UPA00031">
    <property type="reaction ID" value="UER00006"/>
</dbReference>
<dbReference type="Proteomes" id="UP000008210">
    <property type="component" value="Chromosome 1"/>
</dbReference>
<dbReference type="GO" id="GO:0005737">
    <property type="term" value="C:cytoplasm"/>
    <property type="evidence" value="ECO:0007669"/>
    <property type="project" value="UniProtKB-SubCell"/>
</dbReference>
<dbReference type="GO" id="GO:0004821">
    <property type="term" value="F:histidine-tRNA ligase activity"/>
    <property type="evidence" value="ECO:0007669"/>
    <property type="project" value="TreeGrafter"/>
</dbReference>
<dbReference type="GO" id="GO:0006427">
    <property type="term" value="P:histidyl-tRNA aminoacylation"/>
    <property type="evidence" value="ECO:0007669"/>
    <property type="project" value="TreeGrafter"/>
</dbReference>
<dbReference type="GO" id="GO:0000105">
    <property type="term" value="P:L-histidine biosynthetic process"/>
    <property type="evidence" value="ECO:0007669"/>
    <property type="project" value="UniProtKB-UniRule"/>
</dbReference>
<dbReference type="CDD" id="cd00773">
    <property type="entry name" value="HisRS-like_core"/>
    <property type="match status" value="1"/>
</dbReference>
<dbReference type="Gene3D" id="3.30.930.10">
    <property type="entry name" value="Bira Bifunctional Protein, Domain 2"/>
    <property type="match status" value="1"/>
</dbReference>
<dbReference type="HAMAP" id="MF_00125">
    <property type="entry name" value="HisZ"/>
    <property type="match status" value="1"/>
</dbReference>
<dbReference type="InterPro" id="IPR045864">
    <property type="entry name" value="aa-tRNA-synth_II/BPL/LPL"/>
</dbReference>
<dbReference type="InterPro" id="IPR041715">
    <property type="entry name" value="HisRS-like_core"/>
</dbReference>
<dbReference type="InterPro" id="IPR004516">
    <property type="entry name" value="HisRS/HisZ"/>
</dbReference>
<dbReference type="InterPro" id="IPR004517">
    <property type="entry name" value="HisZ"/>
</dbReference>
<dbReference type="NCBIfam" id="TIGR00443">
    <property type="entry name" value="hisZ_biosyn_reg"/>
    <property type="match status" value="1"/>
</dbReference>
<dbReference type="NCBIfam" id="NF008935">
    <property type="entry name" value="PRK12292.1-1"/>
    <property type="match status" value="1"/>
</dbReference>
<dbReference type="NCBIfam" id="NF009086">
    <property type="entry name" value="PRK12421.1"/>
    <property type="match status" value="1"/>
</dbReference>
<dbReference type="PANTHER" id="PTHR43707:SF1">
    <property type="entry name" value="HISTIDINE--TRNA LIGASE, MITOCHONDRIAL-RELATED"/>
    <property type="match status" value="1"/>
</dbReference>
<dbReference type="PANTHER" id="PTHR43707">
    <property type="entry name" value="HISTIDYL-TRNA SYNTHETASE"/>
    <property type="match status" value="1"/>
</dbReference>
<dbReference type="Pfam" id="PF13393">
    <property type="entry name" value="tRNA-synt_His"/>
    <property type="match status" value="1"/>
</dbReference>
<dbReference type="SUPFAM" id="SSF55681">
    <property type="entry name" value="Class II aaRS and biotin synthetases"/>
    <property type="match status" value="1"/>
</dbReference>
<keyword id="KW-0028">Amino-acid biosynthesis</keyword>
<keyword id="KW-0963">Cytoplasm</keyword>
<keyword id="KW-0368">Histidine biosynthesis</keyword>
<keyword id="KW-1185">Reference proteome</keyword>
<feature type="chain" id="PRO_1000016281" description="ATP phosphoribosyltransferase regulatory subunit">
    <location>
        <begin position="1"/>
        <end position="383"/>
    </location>
</feature>
<accession>Q0K971</accession>
<evidence type="ECO:0000255" key="1">
    <source>
        <dbReference type="HAMAP-Rule" id="MF_00125"/>
    </source>
</evidence>
<gene>
    <name evidence="1" type="primary">hisZ</name>
    <name type="ordered locus">H16_A2355</name>
</gene>
<comment type="function">
    <text evidence="1">Required for the first step of histidine biosynthesis. May allow the feedback regulation of ATP phosphoribosyltransferase activity by histidine.</text>
</comment>
<comment type="pathway">
    <text evidence="1">Amino-acid biosynthesis; L-histidine biosynthesis; L-histidine from 5-phospho-alpha-D-ribose 1-diphosphate: step 1/9.</text>
</comment>
<comment type="subunit">
    <text evidence="1">Heteromultimer composed of HisG and HisZ subunits.</text>
</comment>
<comment type="subcellular location">
    <subcellularLocation>
        <location evidence="1">Cytoplasm</location>
    </subcellularLocation>
</comment>
<comment type="miscellaneous">
    <text>This function is generally fulfilled by the C-terminal part of HisG, which is missing in some bacteria such as this one.</text>
</comment>
<comment type="similarity">
    <text evidence="1">Belongs to the class-II aminoacyl-tRNA synthetase family. HisZ subfamily.</text>
</comment>
<sequence length="383" mass="41648">MSNHWLLPENIADVLPSEARKIEELRRRMLDLFRTYGYELVMPPMLEYLESLLTGTGHDLDLRTLKLVDQLSGRTMGLRADITPQVARIDAHLLNRPGVTRLCYAGNVLHARPAGFHATREPIQIGAEIYGHAGLEADIEIQDLMLAALQAAGLSDVRIDMCHAGILEALLAGLPSIRKIEDALFAALETKDVPALRELTVGMPQTERDALLALPTLYGGVDVIDRARATLPASPAIGRALDELAALAVQVRGASVNIDLSDLRGYHYHSGVMFAAYVAGLPNYVARGGRYDKVGEAFGRARPATGFSLDLREVAALSPVEVRAQAIFAPWDADPALRAAISALRAAGEIVIQSLPGHTHELDEFNCDRQLVRQDAGWAVVPR</sequence>
<reference key="1">
    <citation type="journal article" date="2006" name="Nat. Biotechnol.">
        <title>Genome sequence of the bioplastic-producing 'Knallgas' bacterium Ralstonia eutropha H16.</title>
        <authorList>
            <person name="Pohlmann A."/>
            <person name="Fricke W.F."/>
            <person name="Reinecke F."/>
            <person name="Kusian B."/>
            <person name="Liesegang H."/>
            <person name="Cramm R."/>
            <person name="Eitinger T."/>
            <person name="Ewering C."/>
            <person name="Poetter M."/>
            <person name="Schwartz E."/>
            <person name="Strittmatter A."/>
            <person name="Voss I."/>
            <person name="Gottschalk G."/>
            <person name="Steinbuechel A."/>
            <person name="Friedrich B."/>
            <person name="Bowien B."/>
        </authorList>
    </citation>
    <scope>NUCLEOTIDE SEQUENCE [LARGE SCALE GENOMIC DNA]</scope>
    <source>
        <strain>ATCC 17699 / DSM 428 / KCTC 22496 / NCIMB 10442 / H16 / Stanier 337</strain>
    </source>
</reference>
<proteinExistence type="inferred from homology"/>